<name>GLT11_DROME</name>
<accession>Q8IA41</accession>
<accession>Q9VUT5</accession>
<keyword id="KW-1015">Disulfide bond</keyword>
<keyword id="KW-0325">Glycoprotein</keyword>
<keyword id="KW-0333">Golgi apparatus</keyword>
<keyword id="KW-0430">Lectin</keyword>
<keyword id="KW-0472">Membrane</keyword>
<keyword id="KW-1185">Reference proteome</keyword>
<keyword id="KW-0735">Signal-anchor</keyword>
<keyword id="KW-0812">Transmembrane</keyword>
<keyword id="KW-1133">Transmembrane helix</keyword>
<protein>
    <recommendedName>
        <fullName>Putative inactive polypeptide N-acetylgalactosaminyltransferase 11</fullName>
        <shortName>pp-GaNTase 11</shortName>
    </recommendedName>
    <alternativeName>
        <fullName>Inactive UDP-GalNAc:polypeptide N-acetylgalactosaminyltransferase 11</fullName>
    </alternativeName>
    <alternativeName>
        <fullName>Inactive protein-UDP acetylgalactosaminyltransferase 11</fullName>
    </alternativeName>
</protein>
<comment type="function">
    <text evidence="4">Probable inactive glycosyltransferase.</text>
</comment>
<comment type="subcellular location">
    <subcellularLocation>
        <location evidence="1">Golgi apparatus membrane</location>
        <topology evidence="1">Single-pass type II membrane protein</topology>
    </subcellularLocation>
</comment>
<comment type="domain">
    <text evidence="1">There are two conserved domains in the glycosyltransferase region: the N-terminal domain (domain A, also called GT1 motif), which is probably involved in manganese coordination and substrate binding and the C-terminal domain (domain B, also called Gal/GalNAc-T motif), which is probably involved in catalytic reaction and UDP-Gal binding.</text>
</comment>
<comment type="domain">
    <text evidence="1">The ricin B-type lectin domain binds to GalNAc and contributes to the glycopeptide specificity.</text>
</comment>
<comment type="similarity">
    <text evidence="4">Belongs to the glycosyltransferase 2 family. GalNAc-T subfamily.</text>
</comment>
<comment type="caution">
    <text evidence="4">Although strongly related to polypeptide N-acetylgalactosaminyltransferase proteins, it lacks the conserved Asp-Xaa-His motif in positions 199-201 and the conserved His residue in position 330 which are involved in the binding to the cofactor Mn(2+). This suggests that it may have lost its activity.</text>
</comment>
<comment type="sequence caution" evidence="4">
    <conflict type="erroneous initiation">
        <sequence resource="EMBL-CDS" id="AAF49588"/>
    </conflict>
</comment>
<proteinExistence type="inferred from homology"/>
<dbReference type="EMBL" id="AF326979">
    <property type="protein sequence ID" value="AAO13781.1"/>
    <property type="molecule type" value="Genomic_DNA"/>
</dbReference>
<dbReference type="EMBL" id="AE014296">
    <property type="protein sequence ID" value="AAF49588.1"/>
    <property type="status" value="ALT_INIT"/>
    <property type="molecule type" value="Genomic_DNA"/>
</dbReference>
<dbReference type="RefSeq" id="NP_648799.1">
    <property type="nucleotide sequence ID" value="NM_140542.2"/>
</dbReference>
<dbReference type="SMR" id="Q8IA41"/>
<dbReference type="FunCoup" id="Q8IA41">
    <property type="interactions" value="37"/>
</dbReference>
<dbReference type="STRING" id="7227.FBpp0075334"/>
<dbReference type="CAZy" id="CBM13">
    <property type="family name" value="Carbohydrate-Binding Module Family 13"/>
</dbReference>
<dbReference type="CAZy" id="GT27">
    <property type="family name" value="Glycosyltransferase Family 27"/>
</dbReference>
<dbReference type="GlyCosmos" id="Q8IA41">
    <property type="glycosylation" value="4 sites, No reported glycans"/>
</dbReference>
<dbReference type="GlyGen" id="Q8IA41">
    <property type="glycosylation" value="4 sites"/>
</dbReference>
<dbReference type="PaxDb" id="7227-FBpp0075334"/>
<dbReference type="EnsemblMetazoa" id="FBtr0075581">
    <property type="protein sequence ID" value="FBpp0075334"/>
    <property type="gene ID" value="FBgn0036528"/>
</dbReference>
<dbReference type="GeneID" id="39714"/>
<dbReference type="KEGG" id="dme:Dmel_CG7579"/>
<dbReference type="UCSC" id="CG7579-RA">
    <property type="organism name" value="d. melanogaster"/>
</dbReference>
<dbReference type="AGR" id="FB:FBgn0036528"/>
<dbReference type="FlyBase" id="FBgn0036528">
    <property type="gene designation" value="CG7579"/>
</dbReference>
<dbReference type="VEuPathDB" id="VectorBase:FBgn0036528"/>
<dbReference type="eggNOG" id="KOG3736">
    <property type="taxonomic scope" value="Eukaryota"/>
</dbReference>
<dbReference type="GeneTree" id="ENSGT00940000166027"/>
<dbReference type="HOGENOM" id="CLU_013477_0_1_1"/>
<dbReference type="InParanoid" id="Q8IA41"/>
<dbReference type="OrthoDB" id="7846317at2759"/>
<dbReference type="PhylomeDB" id="Q8IA41"/>
<dbReference type="Reactome" id="R-DME-913709">
    <property type="pathway name" value="O-linked glycosylation of mucins"/>
</dbReference>
<dbReference type="BioGRID-ORCS" id="39714">
    <property type="hits" value="0 hits in 3 CRISPR screens"/>
</dbReference>
<dbReference type="GenomeRNAi" id="39714"/>
<dbReference type="PRO" id="PR:Q8IA41"/>
<dbReference type="Proteomes" id="UP000000803">
    <property type="component" value="Chromosome 3L"/>
</dbReference>
<dbReference type="Bgee" id="FBgn0036528">
    <property type="expression patterns" value="Expressed in male accessory gland main cell (Drosophila) in male reproductive gland and 7 other cell types or tissues"/>
</dbReference>
<dbReference type="GO" id="GO:0005794">
    <property type="term" value="C:Golgi apparatus"/>
    <property type="evidence" value="ECO:0000318"/>
    <property type="project" value="GO_Central"/>
</dbReference>
<dbReference type="GO" id="GO:0000139">
    <property type="term" value="C:Golgi membrane"/>
    <property type="evidence" value="ECO:0007669"/>
    <property type="project" value="UniProtKB-SubCell"/>
</dbReference>
<dbReference type="GO" id="GO:0030246">
    <property type="term" value="F:carbohydrate binding"/>
    <property type="evidence" value="ECO:0007669"/>
    <property type="project" value="UniProtKB-KW"/>
</dbReference>
<dbReference type="GO" id="GO:0006493">
    <property type="term" value="P:protein O-linked glycosylation"/>
    <property type="evidence" value="ECO:0000250"/>
    <property type="project" value="UniProtKB"/>
</dbReference>
<dbReference type="CDD" id="cd23461">
    <property type="entry name" value="beta-trefoil_Ricin_Pgant8-like"/>
    <property type="match status" value="1"/>
</dbReference>
<dbReference type="CDD" id="cd02510">
    <property type="entry name" value="pp-GalNAc-T"/>
    <property type="match status" value="1"/>
</dbReference>
<dbReference type="FunFam" id="2.80.10.50:FF:000177">
    <property type="entry name" value="Putative polypeptide N-acetylgalactosaminyltransferase 11"/>
    <property type="match status" value="1"/>
</dbReference>
<dbReference type="Gene3D" id="2.80.10.50">
    <property type="match status" value="1"/>
</dbReference>
<dbReference type="Gene3D" id="3.90.550.10">
    <property type="entry name" value="Spore Coat Polysaccharide Biosynthesis Protein SpsA, Chain A"/>
    <property type="match status" value="1"/>
</dbReference>
<dbReference type="InterPro" id="IPR045885">
    <property type="entry name" value="GalNAc-T"/>
</dbReference>
<dbReference type="InterPro" id="IPR001173">
    <property type="entry name" value="Glyco_trans_2-like"/>
</dbReference>
<dbReference type="InterPro" id="IPR029044">
    <property type="entry name" value="Nucleotide-diphossugar_trans"/>
</dbReference>
<dbReference type="InterPro" id="IPR035992">
    <property type="entry name" value="Ricin_B-like_lectins"/>
</dbReference>
<dbReference type="InterPro" id="IPR000772">
    <property type="entry name" value="Ricin_B_lectin"/>
</dbReference>
<dbReference type="PANTHER" id="PTHR11675">
    <property type="entry name" value="N-ACETYLGALACTOSAMINYLTRANSFERASE"/>
    <property type="match status" value="1"/>
</dbReference>
<dbReference type="PANTHER" id="PTHR11675:SF134">
    <property type="entry name" value="N-ACETYLGALACTOSAMINYLTRANSFERASE 4-RELATED"/>
    <property type="match status" value="1"/>
</dbReference>
<dbReference type="Pfam" id="PF00535">
    <property type="entry name" value="Glycos_transf_2"/>
    <property type="match status" value="1"/>
</dbReference>
<dbReference type="Pfam" id="PF00652">
    <property type="entry name" value="Ricin_B_lectin"/>
    <property type="match status" value="1"/>
</dbReference>
<dbReference type="SMART" id="SM00458">
    <property type="entry name" value="RICIN"/>
    <property type="match status" value="1"/>
</dbReference>
<dbReference type="SUPFAM" id="SSF53448">
    <property type="entry name" value="Nucleotide-diphospho-sugar transferases"/>
    <property type="match status" value="1"/>
</dbReference>
<dbReference type="SUPFAM" id="SSF50370">
    <property type="entry name" value="Ricin B-like lectins"/>
    <property type="match status" value="1"/>
</dbReference>
<dbReference type="PROSITE" id="PS50231">
    <property type="entry name" value="RICIN_B_LECTIN"/>
    <property type="match status" value="1"/>
</dbReference>
<organism>
    <name type="scientific">Drosophila melanogaster</name>
    <name type="common">Fruit fly</name>
    <dbReference type="NCBI Taxonomy" id="7227"/>
    <lineage>
        <taxon>Eukaryota</taxon>
        <taxon>Metazoa</taxon>
        <taxon>Ecdysozoa</taxon>
        <taxon>Arthropoda</taxon>
        <taxon>Hexapoda</taxon>
        <taxon>Insecta</taxon>
        <taxon>Pterygota</taxon>
        <taxon>Neoptera</taxon>
        <taxon>Endopterygota</taxon>
        <taxon>Diptera</taxon>
        <taxon>Brachycera</taxon>
        <taxon>Muscomorpha</taxon>
        <taxon>Ephydroidea</taxon>
        <taxon>Drosophilidae</taxon>
        <taxon>Drosophila</taxon>
        <taxon>Sophophora</taxon>
    </lineage>
</organism>
<evidence type="ECO:0000250" key="1"/>
<evidence type="ECO:0000255" key="2"/>
<evidence type="ECO:0000255" key="3">
    <source>
        <dbReference type="PROSITE-ProRule" id="PRU00174"/>
    </source>
</evidence>
<evidence type="ECO:0000305" key="4"/>
<evidence type="ECO:0000312" key="5">
    <source>
        <dbReference type="FlyBase" id="FBgn0036528"/>
    </source>
</evidence>
<gene>
    <name evidence="5" type="primary">pgant11</name>
    <name evidence="5" type="ORF">CG7579</name>
</gene>
<sequence>MKSLLFGTPCSCAIFILVYCIITLFIWFLYTDNLSNAIVDFEYFSIKNLGELGKEAHLQMTETDLVDAQLQNEKYQYNAWLSERIPLKRTLEDYRDPQCLKINYSSEKTVTVSIVIAIQQEHPHTLLRGIYSVITQTSPYLLKEIVLVHDGHPDLDLIRHIHHKLPIVIQLEMESSKGIIHARLTGAGVATGDILVFLNGHMEVTRGWLPPLLEPILLNNQTVTEPIVDAISRESFAYRKLVEPEQLAFDWQLDHIFLPLDQHSWNSLPKPYPSSQLEGRVFAIDRKWFWHLGGWDEGLRDYGGDALELSLKVWQCGGLILAVPCSRVGIIYKRDELEAQMAPNRNPSLQVQKNFKRVVDVWLDEYKLHFYRYNPKLRNLTAESLDKPRDLRRRLNCKSFEWYRSQVAPQIRNHFLHAGLTNYPIGKIMPFVAPHFCLSIKGGFPVIRKCHSTNFEDWTLTSRCQLKHGNMCLDVDYKNNVRATKCTKKLSKNPWHYNYQHSSFVSNGNKCLQIDVNKVGLILSACDSDVTEQRWMFTKVQDFKLDHMRDICLSVNH</sequence>
<reference key="1">
    <citation type="journal article" date="2002" name="J. Biol. Chem.">
        <title>Functional conservation of subfamilies of putative UDP-N-acetylgalactosamine:polypeptide N-acetylgalactosaminyltransferases in Drosophila, Caenorhabditis elegans, and mammals. One subfamily composed of l(2)35Aa is essential in Drosophila.</title>
        <authorList>
            <person name="Schwientek T."/>
            <person name="Bennett E.P."/>
            <person name="Flores C."/>
            <person name="Thacker J."/>
            <person name="Hollmann M."/>
            <person name="Reis C.A."/>
            <person name="Behrens J."/>
            <person name="Mandel U."/>
            <person name="Keck B."/>
            <person name="Schaefer M.A."/>
            <person name="Haselmann K."/>
            <person name="Zubarev R."/>
            <person name="Roepstorff P."/>
            <person name="Burchell J.M."/>
            <person name="Taylor-Papadimitriou J."/>
            <person name="Hollingsworth M.A."/>
            <person name="Clausen H."/>
        </authorList>
    </citation>
    <scope>NUCLEOTIDE SEQUENCE [GENOMIC DNA]</scope>
</reference>
<reference key="2">
    <citation type="journal article" date="2000" name="Science">
        <title>The genome sequence of Drosophila melanogaster.</title>
        <authorList>
            <person name="Adams M.D."/>
            <person name="Celniker S.E."/>
            <person name="Holt R.A."/>
            <person name="Evans C.A."/>
            <person name="Gocayne J.D."/>
            <person name="Amanatides P.G."/>
            <person name="Scherer S.E."/>
            <person name="Li P.W."/>
            <person name="Hoskins R.A."/>
            <person name="Galle R.F."/>
            <person name="George R.A."/>
            <person name="Lewis S.E."/>
            <person name="Richards S."/>
            <person name="Ashburner M."/>
            <person name="Henderson S.N."/>
            <person name="Sutton G.G."/>
            <person name="Wortman J.R."/>
            <person name="Yandell M.D."/>
            <person name="Zhang Q."/>
            <person name="Chen L.X."/>
            <person name="Brandon R.C."/>
            <person name="Rogers Y.-H.C."/>
            <person name="Blazej R.G."/>
            <person name="Champe M."/>
            <person name="Pfeiffer B.D."/>
            <person name="Wan K.H."/>
            <person name="Doyle C."/>
            <person name="Baxter E.G."/>
            <person name="Helt G."/>
            <person name="Nelson C.R."/>
            <person name="Miklos G.L.G."/>
            <person name="Abril J.F."/>
            <person name="Agbayani A."/>
            <person name="An H.-J."/>
            <person name="Andrews-Pfannkoch C."/>
            <person name="Baldwin D."/>
            <person name="Ballew R.M."/>
            <person name="Basu A."/>
            <person name="Baxendale J."/>
            <person name="Bayraktaroglu L."/>
            <person name="Beasley E.M."/>
            <person name="Beeson K.Y."/>
            <person name="Benos P.V."/>
            <person name="Berman B.P."/>
            <person name="Bhandari D."/>
            <person name="Bolshakov S."/>
            <person name="Borkova D."/>
            <person name="Botchan M.R."/>
            <person name="Bouck J."/>
            <person name="Brokstein P."/>
            <person name="Brottier P."/>
            <person name="Burtis K.C."/>
            <person name="Busam D.A."/>
            <person name="Butler H."/>
            <person name="Cadieu E."/>
            <person name="Center A."/>
            <person name="Chandra I."/>
            <person name="Cherry J.M."/>
            <person name="Cawley S."/>
            <person name="Dahlke C."/>
            <person name="Davenport L.B."/>
            <person name="Davies P."/>
            <person name="de Pablos B."/>
            <person name="Delcher A."/>
            <person name="Deng Z."/>
            <person name="Mays A.D."/>
            <person name="Dew I."/>
            <person name="Dietz S.M."/>
            <person name="Dodson K."/>
            <person name="Doup L.E."/>
            <person name="Downes M."/>
            <person name="Dugan-Rocha S."/>
            <person name="Dunkov B.C."/>
            <person name="Dunn P."/>
            <person name="Durbin K.J."/>
            <person name="Evangelista C.C."/>
            <person name="Ferraz C."/>
            <person name="Ferriera S."/>
            <person name="Fleischmann W."/>
            <person name="Fosler C."/>
            <person name="Gabrielian A.E."/>
            <person name="Garg N.S."/>
            <person name="Gelbart W.M."/>
            <person name="Glasser K."/>
            <person name="Glodek A."/>
            <person name="Gong F."/>
            <person name="Gorrell J.H."/>
            <person name="Gu Z."/>
            <person name="Guan P."/>
            <person name="Harris M."/>
            <person name="Harris N.L."/>
            <person name="Harvey D.A."/>
            <person name="Heiman T.J."/>
            <person name="Hernandez J.R."/>
            <person name="Houck J."/>
            <person name="Hostin D."/>
            <person name="Houston K.A."/>
            <person name="Howland T.J."/>
            <person name="Wei M.-H."/>
            <person name="Ibegwam C."/>
            <person name="Jalali M."/>
            <person name="Kalush F."/>
            <person name="Karpen G.H."/>
            <person name="Ke Z."/>
            <person name="Kennison J.A."/>
            <person name="Ketchum K.A."/>
            <person name="Kimmel B.E."/>
            <person name="Kodira C.D."/>
            <person name="Kraft C.L."/>
            <person name="Kravitz S."/>
            <person name="Kulp D."/>
            <person name="Lai Z."/>
            <person name="Lasko P."/>
            <person name="Lei Y."/>
            <person name="Levitsky A.A."/>
            <person name="Li J.H."/>
            <person name="Li Z."/>
            <person name="Liang Y."/>
            <person name="Lin X."/>
            <person name="Liu X."/>
            <person name="Mattei B."/>
            <person name="McIntosh T.C."/>
            <person name="McLeod M.P."/>
            <person name="McPherson D."/>
            <person name="Merkulov G."/>
            <person name="Milshina N.V."/>
            <person name="Mobarry C."/>
            <person name="Morris J."/>
            <person name="Moshrefi A."/>
            <person name="Mount S.M."/>
            <person name="Moy M."/>
            <person name="Murphy B."/>
            <person name="Murphy L."/>
            <person name="Muzny D.M."/>
            <person name="Nelson D.L."/>
            <person name="Nelson D.R."/>
            <person name="Nelson K.A."/>
            <person name="Nixon K."/>
            <person name="Nusskern D.R."/>
            <person name="Pacleb J.M."/>
            <person name="Palazzolo M."/>
            <person name="Pittman G.S."/>
            <person name="Pan S."/>
            <person name="Pollard J."/>
            <person name="Puri V."/>
            <person name="Reese M.G."/>
            <person name="Reinert K."/>
            <person name="Remington K."/>
            <person name="Saunders R.D.C."/>
            <person name="Scheeler F."/>
            <person name="Shen H."/>
            <person name="Shue B.C."/>
            <person name="Siden-Kiamos I."/>
            <person name="Simpson M."/>
            <person name="Skupski M.P."/>
            <person name="Smith T.J."/>
            <person name="Spier E."/>
            <person name="Spradling A.C."/>
            <person name="Stapleton M."/>
            <person name="Strong R."/>
            <person name="Sun E."/>
            <person name="Svirskas R."/>
            <person name="Tector C."/>
            <person name="Turner R."/>
            <person name="Venter E."/>
            <person name="Wang A.H."/>
            <person name="Wang X."/>
            <person name="Wang Z.-Y."/>
            <person name="Wassarman D.A."/>
            <person name="Weinstock G.M."/>
            <person name="Weissenbach J."/>
            <person name="Williams S.M."/>
            <person name="Woodage T."/>
            <person name="Worley K.C."/>
            <person name="Wu D."/>
            <person name="Yang S."/>
            <person name="Yao Q.A."/>
            <person name="Ye J."/>
            <person name="Yeh R.-F."/>
            <person name="Zaveri J.S."/>
            <person name="Zhan M."/>
            <person name="Zhang G."/>
            <person name="Zhao Q."/>
            <person name="Zheng L."/>
            <person name="Zheng X.H."/>
            <person name="Zhong F.N."/>
            <person name="Zhong W."/>
            <person name="Zhou X."/>
            <person name="Zhu S.C."/>
            <person name="Zhu X."/>
            <person name="Smith H.O."/>
            <person name="Gibbs R.A."/>
            <person name="Myers E.W."/>
            <person name="Rubin G.M."/>
            <person name="Venter J.C."/>
        </authorList>
    </citation>
    <scope>NUCLEOTIDE SEQUENCE [LARGE SCALE GENOMIC DNA]</scope>
    <source>
        <strain>Berkeley</strain>
    </source>
</reference>
<reference key="3">
    <citation type="journal article" date="2002" name="Genome Biol.">
        <title>Annotation of the Drosophila melanogaster euchromatic genome: a systematic review.</title>
        <authorList>
            <person name="Misra S."/>
            <person name="Crosby M.A."/>
            <person name="Mungall C.J."/>
            <person name="Matthews B.B."/>
            <person name="Campbell K.S."/>
            <person name="Hradecky P."/>
            <person name="Huang Y."/>
            <person name="Kaminker J.S."/>
            <person name="Millburn G.H."/>
            <person name="Prochnik S.E."/>
            <person name="Smith C.D."/>
            <person name="Tupy J.L."/>
            <person name="Whitfield E.J."/>
            <person name="Bayraktaroglu L."/>
            <person name="Berman B.P."/>
            <person name="Bettencourt B.R."/>
            <person name="Celniker S.E."/>
            <person name="de Grey A.D.N.J."/>
            <person name="Drysdale R.A."/>
            <person name="Harris N.L."/>
            <person name="Richter J."/>
            <person name="Russo S."/>
            <person name="Schroeder A.J."/>
            <person name="Shu S.Q."/>
            <person name="Stapleton M."/>
            <person name="Yamada C."/>
            <person name="Ashburner M."/>
            <person name="Gelbart W.M."/>
            <person name="Rubin G.M."/>
            <person name="Lewis S.E."/>
        </authorList>
    </citation>
    <scope>GENOME REANNOTATION</scope>
    <source>
        <strain>Berkeley</strain>
    </source>
</reference>
<feature type="chain" id="PRO_0000059165" description="Putative inactive polypeptide N-acetylgalactosaminyltransferase 11">
    <location>
        <begin position="1"/>
        <end position="557"/>
    </location>
</feature>
<feature type="topological domain" description="Cytoplasmic" evidence="2">
    <location>
        <begin position="1"/>
        <end position="4"/>
    </location>
</feature>
<feature type="transmembrane region" description="Helical; Signal-anchor for type II membrane protein" evidence="2">
    <location>
        <begin position="5"/>
        <end position="27"/>
    </location>
</feature>
<feature type="topological domain" description="Lumenal" evidence="2">
    <location>
        <begin position="28"/>
        <end position="557"/>
    </location>
</feature>
<feature type="domain" description="Ricin B-type lectin" evidence="3">
    <location>
        <begin position="456"/>
        <end position="557"/>
    </location>
</feature>
<feature type="region of interest" description="Catalytic subdomain A">
    <location>
        <begin position="109"/>
        <end position="215"/>
    </location>
</feature>
<feature type="region of interest" description="Catalytic subdomain B">
    <location>
        <begin position="271"/>
        <end position="333"/>
    </location>
</feature>
<feature type="glycosylation site" description="N-linked (GlcNAc...) asparagine" evidence="2">
    <location>
        <position position="33"/>
    </location>
</feature>
<feature type="glycosylation site" description="N-linked (GlcNAc...) asparagine" evidence="2">
    <location>
        <position position="103"/>
    </location>
</feature>
<feature type="glycosylation site" description="N-linked (GlcNAc...) asparagine" evidence="2">
    <location>
        <position position="220"/>
    </location>
</feature>
<feature type="glycosylation site" description="N-linked (GlcNAc...) asparagine" evidence="2">
    <location>
        <position position="379"/>
    </location>
</feature>
<feature type="disulfide bond" evidence="3">
    <location>
        <begin position="99"/>
        <end position="325"/>
    </location>
</feature>
<feature type="disulfide bond" evidence="3">
    <location>
        <begin position="316"/>
        <end position="397"/>
    </location>
</feature>
<feature type="disulfide bond" evidence="3">
    <location>
        <begin position="437"/>
        <end position="450"/>
    </location>
</feature>
<feature type="disulfide bond" evidence="3">
    <location>
        <begin position="472"/>
        <end position="486"/>
    </location>
</feature>
<feature type="disulfide bond" evidence="3">
    <location>
        <begin position="511"/>
        <end position="526"/>
    </location>
</feature>